<protein>
    <recommendedName>
        <fullName evidence="1">Lactate utilization protein A</fullName>
    </recommendedName>
</protein>
<sequence>MKVSLFVTCLIDLFYTNVGKATVELLERLGCEIDFPEAQTCCGQPAYNSGYIKDAKEAMKQMMRAFADADYVVTPSGSCAAMLKEYPHIFRGDPEWEEEAKRLAAKTYELTQFLVNVLRVEDVGASLPGRATYHTSCHMTRLLGEKEVPLRLLEHVKGLELVPLPNAHQCCGFGGTFSVKMGPISEQMVDEKIEHIEEVKADYLIGADCGCLMNIGGRIGRVGKPIRVMHIAEVLNHRN</sequence>
<feature type="chain" id="PRO_0000384050" description="Lactate utilization protein A">
    <location>
        <begin position="1"/>
        <end position="239"/>
    </location>
</feature>
<evidence type="ECO:0000255" key="1">
    <source>
        <dbReference type="HAMAP-Rule" id="MF_02105"/>
    </source>
</evidence>
<dbReference type="EMBL" id="CP000557">
    <property type="protein sequence ID" value="ABO65750.1"/>
    <property type="molecule type" value="Genomic_DNA"/>
</dbReference>
<dbReference type="RefSeq" id="WP_011886746.1">
    <property type="nucleotide sequence ID" value="NC_009328.1"/>
</dbReference>
<dbReference type="SMR" id="A4IK96"/>
<dbReference type="KEGG" id="gtn:GTNG_0368"/>
<dbReference type="eggNOG" id="COG0247">
    <property type="taxonomic scope" value="Bacteria"/>
</dbReference>
<dbReference type="HOGENOM" id="CLU_023081_1_0_9"/>
<dbReference type="Proteomes" id="UP000001578">
    <property type="component" value="Chromosome"/>
</dbReference>
<dbReference type="GO" id="GO:0005829">
    <property type="term" value="C:cytosol"/>
    <property type="evidence" value="ECO:0007669"/>
    <property type="project" value="TreeGrafter"/>
</dbReference>
<dbReference type="GO" id="GO:0016491">
    <property type="term" value="F:oxidoreductase activity"/>
    <property type="evidence" value="ECO:0007669"/>
    <property type="project" value="UniProtKB-ARBA"/>
</dbReference>
<dbReference type="GO" id="GO:0006089">
    <property type="term" value="P:lactate metabolic process"/>
    <property type="evidence" value="ECO:0007669"/>
    <property type="project" value="UniProtKB-UniRule"/>
</dbReference>
<dbReference type="HAMAP" id="MF_02105">
    <property type="entry name" value="LutA"/>
    <property type="match status" value="1"/>
</dbReference>
<dbReference type="InterPro" id="IPR004017">
    <property type="entry name" value="Cys_rich_dom"/>
</dbReference>
<dbReference type="InterPro" id="IPR022822">
    <property type="entry name" value="LutA"/>
</dbReference>
<dbReference type="PANTHER" id="PTHR30296:SF0">
    <property type="entry name" value="LACTATE UTILIZATION PROTEIN A"/>
    <property type="match status" value="1"/>
</dbReference>
<dbReference type="PANTHER" id="PTHR30296">
    <property type="entry name" value="UNCHARACTERIZED PROTEIN YKGE"/>
    <property type="match status" value="1"/>
</dbReference>
<dbReference type="Pfam" id="PF02754">
    <property type="entry name" value="CCG"/>
    <property type="match status" value="2"/>
</dbReference>
<organism>
    <name type="scientific">Geobacillus thermodenitrificans (strain NG80-2)</name>
    <dbReference type="NCBI Taxonomy" id="420246"/>
    <lineage>
        <taxon>Bacteria</taxon>
        <taxon>Bacillati</taxon>
        <taxon>Bacillota</taxon>
        <taxon>Bacilli</taxon>
        <taxon>Bacillales</taxon>
        <taxon>Anoxybacillaceae</taxon>
        <taxon>Geobacillus</taxon>
    </lineage>
</organism>
<name>LUTA_GEOTN</name>
<comment type="function">
    <text evidence="1">Is involved in L-lactate degradation and allows cells to grow with lactate as the sole carbon source.</text>
</comment>
<comment type="similarity">
    <text evidence="1">Belongs to the LutA/YkgE family.</text>
</comment>
<proteinExistence type="inferred from homology"/>
<reference key="1">
    <citation type="journal article" date="2007" name="Proc. Natl. Acad. Sci. U.S.A.">
        <title>Genome and proteome of long-chain alkane degrading Geobacillus thermodenitrificans NG80-2 isolated from a deep-subsurface oil reservoir.</title>
        <authorList>
            <person name="Feng L."/>
            <person name="Wang W."/>
            <person name="Cheng J."/>
            <person name="Ren Y."/>
            <person name="Zhao G."/>
            <person name="Gao C."/>
            <person name="Tang Y."/>
            <person name="Liu X."/>
            <person name="Han W."/>
            <person name="Peng X."/>
            <person name="Liu R."/>
            <person name="Wang L."/>
        </authorList>
    </citation>
    <scope>NUCLEOTIDE SEQUENCE [LARGE SCALE GENOMIC DNA]</scope>
    <source>
        <strain>NG80-2</strain>
    </source>
</reference>
<accession>A4IK96</accession>
<gene>
    <name evidence="1" type="primary">lutA</name>
    <name type="ordered locus">GTNG_0368</name>
</gene>